<keyword id="KW-0066">ATP synthesis</keyword>
<keyword id="KW-0997">Cell inner membrane</keyword>
<keyword id="KW-1003">Cell membrane</keyword>
<keyword id="KW-0139">CF(1)</keyword>
<keyword id="KW-0375">Hydrogen ion transport</keyword>
<keyword id="KW-0406">Ion transport</keyword>
<keyword id="KW-0472">Membrane</keyword>
<keyword id="KW-0813">Transport</keyword>
<dbReference type="EMBL" id="CP000057">
    <property type="protein sequence ID" value="AAX87534.1"/>
    <property type="molecule type" value="Genomic_DNA"/>
</dbReference>
<dbReference type="RefSeq" id="WP_011272080.1">
    <property type="nucleotide sequence ID" value="NC_007146.2"/>
</dbReference>
<dbReference type="SMR" id="Q4QN63"/>
<dbReference type="KEGG" id="hit:NTHI0610"/>
<dbReference type="HOGENOM" id="CLU_050669_0_1_6"/>
<dbReference type="Proteomes" id="UP000002525">
    <property type="component" value="Chromosome"/>
</dbReference>
<dbReference type="GO" id="GO:0005886">
    <property type="term" value="C:plasma membrane"/>
    <property type="evidence" value="ECO:0007669"/>
    <property type="project" value="UniProtKB-SubCell"/>
</dbReference>
<dbReference type="GO" id="GO:0045259">
    <property type="term" value="C:proton-transporting ATP synthase complex"/>
    <property type="evidence" value="ECO:0007669"/>
    <property type="project" value="UniProtKB-KW"/>
</dbReference>
<dbReference type="GO" id="GO:0005524">
    <property type="term" value="F:ATP binding"/>
    <property type="evidence" value="ECO:0007669"/>
    <property type="project" value="UniProtKB-UniRule"/>
</dbReference>
<dbReference type="GO" id="GO:0046933">
    <property type="term" value="F:proton-transporting ATP synthase activity, rotational mechanism"/>
    <property type="evidence" value="ECO:0007669"/>
    <property type="project" value="UniProtKB-UniRule"/>
</dbReference>
<dbReference type="GO" id="GO:0042777">
    <property type="term" value="P:proton motive force-driven plasma membrane ATP synthesis"/>
    <property type="evidence" value="ECO:0007669"/>
    <property type="project" value="UniProtKB-UniRule"/>
</dbReference>
<dbReference type="CDD" id="cd12151">
    <property type="entry name" value="F1-ATPase_gamma"/>
    <property type="match status" value="1"/>
</dbReference>
<dbReference type="FunFam" id="1.10.287.80:FF:000005">
    <property type="entry name" value="ATP synthase gamma chain"/>
    <property type="match status" value="1"/>
</dbReference>
<dbReference type="FunFam" id="3.40.1380.10:FF:000001">
    <property type="entry name" value="ATP synthase gamma chain"/>
    <property type="match status" value="1"/>
</dbReference>
<dbReference type="Gene3D" id="3.40.1380.10">
    <property type="match status" value="1"/>
</dbReference>
<dbReference type="Gene3D" id="1.10.287.80">
    <property type="entry name" value="ATP synthase, gamma subunit, helix hairpin domain"/>
    <property type="match status" value="1"/>
</dbReference>
<dbReference type="HAMAP" id="MF_00815">
    <property type="entry name" value="ATP_synth_gamma_bact"/>
    <property type="match status" value="1"/>
</dbReference>
<dbReference type="InterPro" id="IPR035968">
    <property type="entry name" value="ATP_synth_F1_ATPase_gsu"/>
</dbReference>
<dbReference type="InterPro" id="IPR000131">
    <property type="entry name" value="ATP_synth_F1_gsu"/>
</dbReference>
<dbReference type="InterPro" id="IPR023632">
    <property type="entry name" value="ATP_synth_F1_gsu_CS"/>
</dbReference>
<dbReference type="NCBIfam" id="TIGR01146">
    <property type="entry name" value="ATPsyn_F1gamma"/>
    <property type="match status" value="1"/>
</dbReference>
<dbReference type="NCBIfam" id="NF004144">
    <property type="entry name" value="PRK05621.1-1"/>
    <property type="match status" value="1"/>
</dbReference>
<dbReference type="PANTHER" id="PTHR11693">
    <property type="entry name" value="ATP SYNTHASE GAMMA CHAIN"/>
    <property type="match status" value="1"/>
</dbReference>
<dbReference type="PANTHER" id="PTHR11693:SF22">
    <property type="entry name" value="ATP SYNTHASE SUBUNIT GAMMA, MITOCHONDRIAL"/>
    <property type="match status" value="1"/>
</dbReference>
<dbReference type="Pfam" id="PF00231">
    <property type="entry name" value="ATP-synt"/>
    <property type="match status" value="1"/>
</dbReference>
<dbReference type="PRINTS" id="PR00126">
    <property type="entry name" value="ATPASEGAMMA"/>
</dbReference>
<dbReference type="SUPFAM" id="SSF52943">
    <property type="entry name" value="ATP synthase (F1-ATPase), gamma subunit"/>
    <property type="match status" value="1"/>
</dbReference>
<dbReference type="PROSITE" id="PS00153">
    <property type="entry name" value="ATPASE_GAMMA"/>
    <property type="match status" value="1"/>
</dbReference>
<name>ATPG_HAEI8</name>
<evidence type="ECO:0000255" key="1">
    <source>
        <dbReference type="HAMAP-Rule" id="MF_00815"/>
    </source>
</evidence>
<feature type="chain" id="PRO_0000073293" description="ATP synthase gamma chain">
    <location>
        <begin position="1"/>
        <end position="289"/>
    </location>
</feature>
<gene>
    <name evidence="1" type="primary">atpG</name>
    <name type="ordered locus">NTHI0610</name>
</gene>
<protein>
    <recommendedName>
        <fullName evidence="1">ATP synthase gamma chain</fullName>
    </recommendedName>
    <alternativeName>
        <fullName evidence="1">ATP synthase F1 sector gamma subunit</fullName>
    </alternativeName>
    <alternativeName>
        <fullName evidence="1">F-ATPase gamma subunit</fullName>
    </alternativeName>
</protein>
<comment type="function">
    <text evidence="1">Produces ATP from ADP in the presence of a proton gradient across the membrane. The gamma chain is believed to be important in regulating ATPase activity and the flow of protons through the CF(0) complex.</text>
</comment>
<comment type="subunit">
    <text evidence="1">F-type ATPases have 2 components, CF(1) - the catalytic core - and CF(0) - the membrane proton channel. CF(1) has five subunits: alpha(3), beta(3), gamma(1), delta(1), epsilon(1). CF(0) has three main subunits: a, b and c.</text>
</comment>
<comment type="subcellular location">
    <subcellularLocation>
        <location evidence="1">Cell inner membrane</location>
        <topology evidence="1">Peripheral membrane protein</topology>
    </subcellularLocation>
</comment>
<comment type="similarity">
    <text evidence="1">Belongs to the ATPase gamma chain family.</text>
</comment>
<accession>Q4QN63</accession>
<organism>
    <name type="scientific">Haemophilus influenzae (strain 86-028NP)</name>
    <dbReference type="NCBI Taxonomy" id="281310"/>
    <lineage>
        <taxon>Bacteria</taxon>
        <taxon>Pseudomonadati</taxon>
        <taxon>Pseudomonadota</taxon>
        <taxon>Gammaproteobacteria</taxon>
        <taxon>Pasteurellales</taxon>
        <taxon>Pasteurellaceae</taxon>
        <taxon>Haemophilus</taxon>
    </lineage>
</organism>
<reference key="1">
    <citation type="journal article" date="2005" name="J. Bacteriol.">
        <title>Genomic sequence of an otitis media isolate of nontypeable Haemophilus influenzae: comparative study with H. influenzae serotype d, strain KW20.</title>
        <authorList>
            <person name="Harrison A."/>
            <person name="Dyer D.W."/>
            <person name="Gillaspy A."/>
            <person name="Ray W.C."/>
            <person name="Mungur R."/>
            <person name="Carson M.B."/>
            <person name="Zhong H."/>
            <person name="Gipson J."/>
            <person name="Gipson M."/>
            <person name="Johnson L.S."/>
            <person name="Lewis L."/>
            <person name="Bakaletz L.O."/>
            <person name="Munson R.S. Jr."/>
        </authorList>
    </citation>
    <scope>NUCLEOTIDE SEQUENCE [LARGE SCALE GENOMIC DNA]</scope>
    <source>
        <strain>86-028NP</strain>
    </source>
</reference>
<sequence length="289" mass="32002">MAGAKEIKTKIASVQSTQKITKAMEMVATSKMRKTQDRMAASRPYSETIRNVISHVSKASIGYKHPFLVECEVKKIGILVISTDRGMCGGLNVNLFKTTLNQIKNWKEQNISTDLGLIGSKGISFFRSFGFNIKGQLSGLGDTPALEELIGVANTMFDAYRNGEIDAVYIAYNKFVNTMSQKPVVQQLVPLPESKDDHLNERQQTWDYLYEPEPKALLDSLLVRYLESQIYQAVVDNLASEQAARMVAMKAATDNAGNLINDLRLVYNKARQASITNELNEIVAGAAAI</sequence>
<proteinExistence type="inferred from homology"/>